<accession>B6DCU5</accession>
<comment type="subcellular location">
    <subcellularLocation>
        <location evidence="1">Secreted</location>
    </subcellularLocation>
</comment>
<comment type="tissue specificity">
    <text>Expressed by the venom gland.</text>
</comment>
<comment type="domain">
    <text evidence="1">The presence of a 'disulfide through disulfide knot' structurally defines this protein as a knottin.</text>
</comment>
<comment type="similarity">
    <text evidence="3">Belongs to the neurotoxin 19 (CSTX) family. 02 (D7) subfamily.</text>
</comment>
<protein>
    <recommendedName>
        <fullName>Toxin-like structure LSTX-D6</fullName>
    </recommendedName>
</protein>
<name>TXZ06_LYCSI</name>
<sequence>MMKVLVVAALLVTLISYSSSEGIDDLEADELLSLMANEQTRAKACTPRYYDCSHDRHSCCRSSMFKDVCTCFYPEGGDNKEVCTCQQPKHLKYMEKATDKIKNLFG</sequence>
<organism>
    <name type="scientific">Lycosa singoriensis</name>
    <name type="common">Wolf spider</name>
    <name type="synonym">Aranea singoriensis</name>
    <dbReference type="NCBI Taxonomy" id="434756"/>
    <lineage>
        <taxon>Eukaryota</taxon>
        <taxon>Metazoa</taxon>
        <taxon>Ecdysozoa</taxon>
        <taxon>Arthropoda</taxon>
        <taxon>Chelicerata</taxon>
        <taxon>Arachnida</taxon>
        <taxon>Araneae</taxon>
        <taxon>Araneomorphae</taxon>
        <taxon>Entelegynae</taxon>
        <taxon>Lycosoidea</taxon>
        <taxon>Lycosidae</taxon>
        <taxon>Lycosa</taxon>
    </lineage>
</organism>
<reference key="1">
    <citation type="journal article" date="2010" name="Zoology">
        <title>Transcriptome analysis of the venom glands of the Chinese wolf spider Lycosa singoriensis.</title>
        <authorList>
            <person name="Zhang Y."/>
            <person name="Chen J."/>
            <person name="Tang X."/>
            <person name="Wang F."/>
            <person name="Jiang L."/>
            <person name="Xiong X."/>
            <person name="Wang M."/>
            <person name="Rong M."/>
            <person name="Liu Z."/>
            <person name="Liang S."/>
        </authorList>
    </citation>
    <scope>NUCLEOTIDE SEQUENCE [LARGE SCALE MRNA]</scope>
    <source>
        <tissue>Venom gland</tissue>
    </source>
</reference>
<evidence type="ECO:0000250" key="1"/>
<evidence type="ECO:0000255" key="2"/>
<evidence type="ECO:0000305" key="3"/>
<proteinExistence type="evidence at transcript level"/>
<dbReference type="EMBL" id="EU926029">
    <property type="protein sequence ID" value="ACI41361.1"/>
    <property type="molecule type" value="mRNA"/>
</dbReference>
<dbReference type="EMBL" id="FM864033">
    <property type="protein sequence ID" value="CAS03630.1"/>
    <property type="molecule type" value="mRNA"/>
</dbReference>
<dbReference type="SMR" id="B6DCU5"/>
<dbReference type="ArachnoServer" id="AS001741">
    <property type="toxin name" value="U3-lycotoxin-Ls1z"/>
</dbReference>
<dbReference type="GO" id="GO:0005576">
    <property type="term" value="C:extracellular region"/>
    <property type="evidence" value="ECO:0007669"/>
    <property type="project" value="UniProtKB-SubCell"/>
</dbReference>
<dbReference type="GO" id="GO:0090729">
    <property type="term" value="F:toxin activity"/>
    <property type="evidence" value="ECO:0007669"/>
    <property type="project" value="UniProtKB-KW"/>
</dbReference>
<dbReference type="InterPro" id="IPR019553">
    <property type="entry name" value="Spider_toxin_CSTX_knottin"/>
</dbReference>
<dbReference type="InterPro" id="IPR011142">
    <property type="entry name" value="Spider_toxin_CSTX_Knottin_CS"/>
</dbReference>
<dbReference type="Pfam" id="PF10530">
    <property type="entry name" value="Toxin_35"/>
    <property type="match status" value="1"/>
</dbReference>
<dbReference type="PROSITE" id="PS60029">
    <property type="entry name" value="SPIDER_CSTX"/>
    <property type="match status" value="1"/>
</dbReference>
<keyword id="KW-1015">Disulfide bond</keyword>
<keyword id="KW-0960">Knottin</keyword>
<keyword id="KW-0964">Secreted</keyword>
<keyword id="KW-0732">Signal</keyword>
<keyword id="KW-0800">Toxin</keyword>
<feature type="signal peptide" evidence="2">
    <location>
        <begin position="1"/>
        <end position="20"/>
    </location>
</feature>
<feature type="propeptide" id="PRO_0000401703" evidence="1">
    <location>
        <begin position="21"/>
        <end position="41"/>
    </location>
</feature>
<feature type="chain" id="PRO_0000401704" description="Toxin-like structure LSTX-D6">
    <location>
        <begin position="42"/>
        <end position="106"/>
    </location>
</feature>
<feature type="disulfide bond" evidence="1">
    <location>
        <begin position="45"/>
        <end position="60"/>
    </location>
</feature>
<feature type="disulfide bond" evidence="1">
    <location>
        <begin position="52"/>
        <end position="69"/>
    </location>
</feature>
<feature type="disulfide bond" evidence="1">
    <location>
        <begin position="59"/>
        <end position="85"/>
    </location>
</feature>
<feature type="disulfide bond" evidence="1">
    <location>
        <begin position="71"/>
        <end position="83"/>
    </location>
</feature>